<protein>
    <recommendedName>
        <fullName evidence="1">Anaerobic glycerol-3-phosphate dehydrogenase subunit B</fullName>
        <shortName evidence="1">Anaerobic G-3-P dehydrogenase subunit B</shortName>
        <shortName evidence="1">Anaerobic G3Pdhase B</shortName>
        <ecNumber evidence="1">1.1.5.3</ecNumber>
    </recommendedName>
</protein>
<sequence length="419" mass="45423">MRFDTVIMGGGLAGLLCGLQLQKHGLRSAIVTRGQSALHFSSGSLDLLSHLPDGQAVTDIHSGLESLRQQAPAHPYSLLGPQRVLDLACQAQALIAKSGAQLQGSVELPHQRITPLGTLRSTWLSSPEVPVWPLPAKKICVVGISGLMDFQAHLAAASLRELDLAVETAEIELPELDVLRNNATEFRAVNIARFLDNEENWPLLLDALIPVANTCEMILIPACFGLADDKLWRWLNEKLPCSLMLLPTLPPSVLSIRLQNQLQRQFVRQGGVWMPGDEVKKVTCKNGVVNEIWTRNHADIPLRPRFAVLASGSFFSGGLVAERNGIREPILGLDVLQTATRGEWYKEDFFAPQPWQQFGVTTDQTLRPSQAGQTIENLFAIGSVLGGFDPIAQGCGGGVCAVSALHAAQQIAQRAGGQQ</sequence>
<comment type="function">
    <text evidence="1">Conversion of glycerol 3-phosphate to dihydroxyacetone. Uses fumarate or nitrate as electron acceptor.</text>
</comment>
<comment type="catalytic activity">
    <reaction evidence="1">
        <text>a quinone + sn-glycerol 3-phosphate = dihydroxyacetone phosphate + a quinol</text>
        <dbReference type="Rhea" id="RHEA:18977"/>
        <dbReference type="ChEBI" id="CHEBI:24646"/>
        <dbReference type="ChEBI" id="CHEBI:57597"/>
        <dbReference type="ChEBI" id="CHEBI:57642"/>
        <dbReference type="ChEBI" id="CHEBI:132124"/>
        <dbReference type="EC" id="1.1.5.3"/>
    </reaction>
</comment>
<comment type="cofactor">
    <cofactor evidence="1">
        <name>FMN</name>
        <dbReference type="ChEBI" id="CHEBI:58210"/>
    </cofactor>
</comment>
<comment type="pathway">
    <text evidence="1">Polyol metabolism; glycerol degradation via glycerol kinase pathway; glycerone phosphate from sn-glycerol 3-phosphate (anaerobic route): step 1/1.</text>
</comment>
<comment type="subunit">
    <text evidence="1">Composed of a catalytic GlpA/B dimer and of membrane bound GlpC.</text>
</comment>
<comment type="similarity">
    <text evidence="1">Belongs to the anaerobic G-3-P dehydrogenase subunit B family.</text>
</comment>
<evidence type="ECO:0000255" key="1">
    <source>
        <dbReference type="HAMAP-Rule" id="MF_00753"/>
    </source>
</evidence>
<dbReference type="EC" id="1.1.5.3" evidence="1"/>
<dbReference type="EMBL" id="CP000034">
    <property type="protein sequence ID" value="ABB62510.1"/>
    <property type="molecule type" value="Genomic_DNA"/>
</dbReference>
<dbReference type="RefSeq" id="WP_001209957.1">
    <property type="nucleotide sequence ID" value="NC_007606.1"/>
</dbReference>
<dbReference type="RefSeq" id="YP_404001.1">
    <property type="nucleotide sequence ID" value="NC_007606.1"/>
</dbReference>
<dbReference type="STRING" id="300267.SDY_2437"/>
<dbReference type="EnsemblBacteria" id="ABB62510">
    <property type="protein sequence ID" value="ABB62510"/>
    <property type="gene ID" value="SDY_2437"/>
</dbReference>
<dbReference type="KEGG" id="sdy:SDY_2437"/>
<dbReference type="PATRIC" id="fig|300267.13.peg.2936"/>
<dbReference type="HOGENOM" id="CLU_047793_0_0_6"/>
<dbReference type="UniPathway" id="UPA00618">
    <property type="reaction ID" value="UER00673"/>
</dbReference>
<dbReference type="Proteomes" id="UP000002716">
    <property type="component" value="Chromosome"/>
</dbReference>
<dbReference type="GO" id="GO:0009331">
    <property type="term" value="C:glycerol-3-phosphate dehydrogenase (FAD) complex"/>
    <property type="evidence" value="ECO:0007669"/>
    <property type="project" value="InterPro"/>
</dbReference>
<dbReference type="GO" id="GO:0004368">
    <property type="term" value="F:glycerol-3-phosphate dehydrogenase (quinone) activity"/>
    <property type="evidence" value="ECO:0007669"/>
    <property type="project" value="UniProtKB-UniRule"/>
</dbReference>
<dbReference type="GO" id="GO:0009061">
    <property type="term" value="P:anaerobic respiration"/>
    <property type="evidence" value="ECO:0007669"/>
    <property type="project" value="TreeGrafter"/>
</dbReference>
<dbReference type="GO" id="GO:0019563">
    <property type="term" value="P:glycerol catabolic process"/>
    <property type="evidence" value="ECO:0007669"/>
    <property type="project" value="UniProtKB-UniRule"/>
</dbReference>
<dbReference type="GO" id="GO:0046168">
    <property type="term" value="P:glycerol-3-phosphate catabolic process"/>
    <property type="evidence" value="ECO:0007669"/>
    <property type="project" value="TreeGrafter"/>
</dbReference>
<dbReference type="HAMAP" id="MF_00753">
    <property type="entry name" value="Glycerol3P_GlpB"/>
    <property type="match status" value="1"/>
</dbReference>
<dbReference type="InterPro" id="IPR003953">
    <property type="entry name" value="FAD-dep_OxRdtase_2_FAD-bd"/>
</dbReference>
<dbReference type="InterPro" id="IPR050315">
    <property type="entry name" value="FAD-oxidoreductase_2"/>
</dbReference>
<dbReference type="InterPro" id="IPR036188">
    <property type="entry name" value="FAD/NAD-bd_sf"/>
</dbReference>
<dbReference type="InterPro" id="IPR009158">
    <property type="entry name" value="G3P_DH_GlpB_su"/>
</dbReference>
<dbReference type="NCBIfam" id="TIGR03378">
    <property type="entry name" value="glycerol3P_GlpB"/>
    <property type="match status" value="1"/>
</dbReference>
<dbReference type="NCBIfam" id="NF003718">
    <property type="entry name" value="PRK05329.1-1"/>
    <property type="match status" value="1"/>
</dbReference>
<dbReference type="NCBIfam" id="NF003719">
    <property type="entry name" value="PRK05329.1-2"/>
    <property type="match status" value="1"/>
</dbReference>
<dbReference type="NCBIfam" id="NF003720">
    <property type="entry name" value="PRK05329.1-3"/>
    <property type="match status" value="1"/>
</dbReference>
<dbReference type="PANTHER" id="PTHR43400:SF11">
    <property type="entry name" value="ANAEROBIC GLYCEROL-3-PHOSPHATE DEHYDROGENASE SUBUNIT B"/>
    <property type="match status" value="1"/>
</dbReference>
<dbReference type="PANTHER" id="PTHR43400">
    <property type="entry name" value="FUMARATE REDUCTASE"/>
    <property type="match status" value="1"/>
</dbReference>
<dbReference type="Pfam" id="PF00890">
    <property type="entry name" value="FAD_binding_2"/>
    <property type="match status" value="1"/>
</dbReference>
<dbReference type="PIRSF" id="PIRSF000141">
    <property type="entry name" value="Anaerobic_G3P_dh"/>
    <property type="match status" value="1"/>
</dbReference>
<dbReference type="SUPFAM" id="SSF51905">
    <property type="entry name" value="FAD/NAD(P)-binding domain"/>
    <property type="match status" value="1"/>
</dbReference>
<gene>
    <name evidence="1" type="primary">glpB</name>
    <name type="ordered locus">SDY_2437</name>
</gene>
<name>GLPB_SHIDS</name>
<organism>
    <name type="scientific">Shigella dysenteriae serotype 1 (strain Sd197)</name>
    <dbReference type="NCBI Taxonomy" id="300267"/>
    <lineage>
        <taxon>Bacteria</taxon>
        <taxon>Pseudomonadati</taxon>
        <taxon>Pseudomonadota</taxon>
        <taxon>Gammaproteobacteria</taxon>
        <taxon>Enterobacterales</taxon>
        <taxon>Enterobacteriaceae</taxon>
        <taxon>Shigella</taxon>
    </lineage>
</organism>
<keyword id="KW-0285">Flavoprotein</keyword>
<keyword id="KW-0288">FMN</keyword>
<keyword id="KW-0560">Oxidoreductase</keyword>
<keyword id="KW-1185">Reference proteome</keyword>
<proteinExistence type="inferred from homology"/>
<reference key="1">
    <citation type="journal article" date="2005" name="Nucleic Acids Res.">
        <title>Genome dynamics and diversity of Shigella species, the etiologic agents of bacillary dysentery.</title>
        <authorList>
            <person name="Yang F."/>
            <person name="Yang J."/>
            <person name="Zhang X."/>
            <person name="Chen L."/>
            <person name="Jiang Y."/>
            <person name="Yan Y."/>
            <person name="Tang X."/>
            <person name="Wang J."/>
            <person name="Xiong Z."/>
            <person name="Dong J."/>
            <person name="Xue Y."/>
            <person name="Zhu Y."/>
            <person name="Xu X."/>
            <person name="Sun L."/>
            <person name="Chen S."/>
            <person name="Nie H."/>
            <person name="Peng J."/>
            <person name="Xu J."/>
            <person name="Wang Y."/>
            <person name="Yuan Z."/>
            <person name="Wen Y."/>
            <person name="Yao Z."/>
            <person name="Shen Y."/>
            <person name="Qiang B."/>
            <person name="Hou Y."/>
            <person name="Yu J."/>
            <person name="Jin Q."/>
        </authorList>
    </citation>
    <scope>NUCLEOTIDE SEQUENCE [LARGE SCALE GENOMIC DNA]</scope>
    <source>
        <strain>Sd197</strain>
    </source>
</reference>
<accession>Q32DU5</accession>
<feature type="chain" id="PRO_0000258908" description="Anaerobic glycerol-3-phosphate dehydrogenase subunit B">
    <location>
        <begin position="1"/>
        <end position="419"/>
    </location>
</feature>